<name>Y2122_ARCFU</name>
<reference key="1">
    <citation type="journal article" date="1997" name="Nature">
        <title>The complete genome sequence of the hyperthermophilic, sulphate-reducing archaeon Archaeoglobus fulgidus.</title>
        <authorList>
            <person name="Klenk H.-P."/>
            <person name="Clayton R.A."/>
            <person name="Tomb J.-F."/>
            <person name="White O."/>
            <person name="Nelson K.E."/>
            <person name="Ketchum K.A."/>
            <person name="Dodson R.J."/>
            <person name="Gwinn M.L."/>
            <person name="Hickey E.K."/>
            <person name="Peterson J.D."/>
            <person name="Richardson D.L."/>
            <person name="Kerlavage A.R."/>
            <person name="Graham D.E."/>
            <person name="Kyrpides N.C."/>
            <person name="Fleischmann R.D."/>
            <person name="Quackenbush J."/>
            <person name="Lee N.H."/>
            <person name="Sutton G.G."/>
            <person name="Gill S.R."/>
            <person name="Kirkness E.F."/>
            <person name="Dougherty B.A."/>
            <person name="McKenney K."/>
            <person name="Adams M.D."/>
            <person name="Loftus B.J."/>
            <person name="Peterson S.N."/>
            <person name="Reich C.I."/>
            <person name="McNeil L.K."/>
            <person name="Badger J.H."/>
            <person name="Glodek A."/>
            <person name="Zhou L."/>
            <person name="Overbeek R."/>
            <person name="Gocayne J.D."/>
            <person name="Weidman J.F."/>
            <person name="McDonald L.A."/>
            <person name="Utterback T.R."/>
            <person name="Cotton M.D."/>
            <person name="Spriggs T."/>
            <person name="Artiach P."/>
            <person name="Kaine B.P."/>
            <person name="Sykes S.M."/>
            <person name="Sadow P.W."/>
            <person name="D'Andrea K.P."/>
            <person name="Bowman C."/>
            <person name="Fujii C."/>
            <person name="Garland S.A."/>
            <person name="Mason T.M."/>
            <person name="Olsen G.J."/>
            <person name="Fraser C.M."/>
            <person name="Smith H.O."/>
            <person name="Woese C.R."/>
            <person name="Venter J.C."/>
        </authorList>
    </citation>
    <scope>NUCLEOTIDE SEQUENCE [LARGE SCALE GENOMIC DNA]</scope>
    <source>
        <strain>ATCC 49558 / DSM 4304 / JCM 9628 / NBRC 100126 / VC-16</strain>
    </source>
</reference>
<organism>
    <name type="scientific">Archaeoglobus fulgidus (strain ATCC 49558 / DSM 4304 / JCM 9628 / NBRC 100126 / VC-16)</name>
    <dbReference type="NCBI Taxonomy" id="224325"/>
    <lineage>
        <taxon>Archaea</taxon>
        <taxon>Methanobacteriati</taxon>
        <taxon>Methanobacteriota</taxon>
        <taxon>Archaeoglobi</taxon>
        <taxon>Archaeoglobales</taxon>
        <taxon>Archaeoglobaceae</taxon>
        <taxon>Archaeoglobus</taxon>
    </lineage>
</organism>
<feature type="chain" id="PRO_0000128094" description="Uncharacterized protein AF_2122">
    <location>
        <begin position="1"/>
        <end position="142"/>
    </location>
</feature>
<feature type="transmembrane region" description="Helical" evidence="1">
    <location>
        <begin position="12"/>
        <end position="29"/>
    </location>
</feature>
<feature type="transmembrane region" description="Helical" evidence="1">
    <location>
        <begin position="44"/>
        <end position="66"/>
    </location>
</feature>
<gene>
    <name type="ordered locus">AF_2122</name>
</gene>
<keyword id="KW-1003">Cell membrane</keyword>
<keyword id="KW-0472">Membrane</keyword>
<keyword id="KW-1185">Reference proteome</keyword>
<keyword id="KW-0812">Transmembrane</keyword>
<keyword id="KW-1133">Transmembrane helix</keyword>
<sequence>MPIAAATDFALNAILRPISDIFVLIYGLLEPINAHLIPEHTNFIYGQLSLLLWGTKFLATILGVTANNATAMANFTDVLHTLSENSYHFFGTVEGESGMAYIAKHSYIELSQNQQLSEDMAVKFARAVNSTIIYFVKVFEYL</sequence>
<proteinExistence type="predicted"/>
<evidence type="ECO:0000255" key="1"/>
<evidence type="ECO:0000305" key="2"/>
<dbReference type="EMBL" id="AE000782">
    <property type="protein sequence ID" value="AAB89149.1"/>
    <property type="molecule type" value="Genomic_DNA"/>
</dbReference>
<dbReference type="PIR" id="B69515">
    <property type="entry name" value="B69515"/>
</dbReference>
<dbReference type="RefSeq" id="WP_010879613.1">
    <property type="nucleotide sequence ID" value="NC_000917.1"/>
</dbReference>
<dbReference type="STRING" id="224325.AF_2122"/>
<dbReference type="PaxDb" id="224325-AF_2122"/>
<dbReference type="EnsemblBacteria" id="AAB89149">
    <property type="protein sequence ID" value="AAB89149"/>
    <property type="gene ID" value="AF_2122"/>
</dbReference>
<dbReference type="KEGG" id="afu:AF_2122"/>
<dbReference type="HOGENOM" id="CLU_1811341_0_0_2"/>
<dbReference type="Proteomes" id="UP000002199">
    <property type="component" value="Chromosome"/>
</dbReference>
<dbReference type="GO" id="GO:0005886">
    <property type="term" value="C:plasma membrane"/>
    <property type="evidence" value="ECO:0007669"/>
    <property type="project" value="UniProtKB-SubCell"/>
</dbReference>
<comment type="subcellular location">
    <subcellularLocation>
        <location evidence="2">Cell membrane</location>
        <topology evidence="2">Multi-pass membrane protein</topology>
    </subcellularLocation>
</comment>
<accession>O28158</accession>
<protein>
    <recommendedName>
        <fullName>Uncharacterized protein AF_2122</fullName>
    </recommendedName>
</protein>